<accession>Q7YT83</accession>
<feature type="signal peptide">
    <location>
        <begin position="1"/>
        <end position="21"/>
    </location>
</feature>
<feature type="propeptide" id="PRO_0000006291" evidence="1">
    <location>
        <begin position="22"/>
        <end position="24"/>
    </location>
</feature>
<feature type="chain" id="PRO_0000006292" description="Cysteine-rich venom protein">
    <location>
        <begin position="25"/>
        <end position="300"/>
    </location>
</feature>
<feature type="domain" description="SCP">
    <location>
        <begin position="62"/>
        <end position="183"/>
    </location>
</feature>
<dbReference type="EC" id="3.4.-.-"/>
<dbReference type="EMBL" id="AJ491318">
    <property type="protein sequence ID" value="CAD36507.1"/>
    <property type="molecule type" value="mRNA"/>
</dbReference>
<dbReference type="SMR" id="Q7YT83"/>
<dbReference type="GO" id="GO:0005576">
    <property type="term" value="C:extracellular region"/>
    <property type="evidence" value="ECO:0007669"/>
    <property type="project" value="UniProtKB-SubCell"/>
</dbReference>
<dbReference type="GO" id="GO:0008233">
    <property type="term" value="F:peptidase activity"/>
    <property type="evidence" value="ECO:0007669"/>
    <property type="project" value="UniProtKB-KW"/>
</dbReference>
<dbReference type="GO" id="GO:0006508">
    <property type="term" value="P:proteolysis"/>
    <property type="evidence" value="ECO:0007669"/>
    <property type="project" value="UniProtKB-KW"/>
</dbReference>
<dbReference type="Gene3D" id="3.40.33.10">
    <property type="entry name" value="CAP"/>
    <property type="match status" value="1"/>
</dbReference>
<dbReference type="InterPro" id="IPR014044">
    <property type="entry name" value="CAP_dom"/>
</dbReference>
<dbReference type="InterPro" id="IPR035940">
    <property type="entry name" value="CAP_sf"/>
</dbReference>
<dbReference type="InterPro" id="IPR001283">
    <property type="entry name" value="CRISP-related"/>
</dbReference>
<dbReference type="PANTHER" id="PTHR10334">
    <property type="entry name" value="CYSTEINE-RICH SECRETORY PROTEIN-RELATED"/>
    <property type="match status" value="1"/>
</dbReference>
<dbReference type="Pfam" id="PF00188">
    <property type="entry name" value="CAP"/>
    <property type="match status" value="1"/>
</dbReference>
<dbReference type="PRINTS" id="PR00837">
    <property type="entry name" value="V5TPXLIKE"/>
</dbReference>
<dbReference type="SMART" id="SM00198">
    <property type="entry name" value="SCP"/>
    <property type="match status" value="1"/>
</dbReference>
<dbReference type="SUPFAM" id="SSF55797">
    <property type="entry name" value="PR-1-like"/>
    <property type="match status" value="1"/>
</dbReference>
<organism>
    <name type="scientific">Conus textile</name>
    <name type="common">Cloth-of-gold cone</name>
    <dbReference type="NCBI Taxonomy" id="6494"/>
    <lineage>
        <taxon>Eukaryota</taxon>
        <taxon>Metazoa</taxon>
        <taxon>Spiralia</taxon>
        <taxon>Lophotrochozoa</taxon>
        <taxon>Mollusca</taxon>
        <taxon>Gastropoda</taxon>
        <taxon>Caenogastropoda</taxon>
        <taxon>Neogastropoda</taxon>
        <taxon>Conoidea</taxon>
        <taxon>Conidae</taxon>
        <taxon>Conus</taxon>
        <taxon>Cylinder</taxon>
    </lineage>
</organism>
<reference key="1">
    <citation type="journal article" date="2003" name="J. Biol. Chem.">
        <title>Isolation and characterization of a cone snail protease with homology to CRISP proteins of the pathogenesis-related protein superfamily.</title>
        <authorList>
            <person name="Milne T.J."/>
            <person name="Abbenante G."/>
            <person name="Tyndall J.D.A."/>
            <person name="Halliday J."/>
            <person name="Lewis R.J."/>
        </authorList>
    </citation>
    <scope>NUCLEOTIDE SEQUENCE [MRNA]</scope>
    <scope>PROTEIN SEQUENCE OF 25-40 AND 70-80</scope>
    <scope>MASS SPECTROMETRY</scope>
    <source>
        <tissue>Venom duct</tissue>
    </source>
</reference>
<keyword id="KW-0165">Cleavage on pair of basic residues</keyword>
<keyword id="KW-0903">Direct protein sequencing</keyword>
<keyword id="KW-1015">Disulfide bond</keyword>
<keyword id="KW-0378">Hydrolase</keyword>
<keyword id="KW-0645">Protease</keyword>
<keyword id="KW-0964">Secreted</keyword>
<keyword id="KW-0732">Signal</keyword>
<proteinExistence type="evidence at protein level"/>
<sequence>MLSTMQTVGAVLMLSIVLVAGRKRHHCDSKYYELTPAHTMCLTDKPNAVAVPLTQETEHEILEMHNKIRADVTDAANMLKMEWDERLATVAQKWAMQCILGHDSGRRGEPDLPGSVGQNVAWSSGDLTFLGAVQMWADEIVDFQYGVWTDGTGHYIQQVFAGASRIGCGQSACGNNKYFVCNYYKGTMGDEPYQLGRPCSQCRSSCQHIRGSQGRWGSLCDCTNGPDACFNGGIFNINTCQCECSGIWGGADCQEKHCPNEDFDDMCRYPDALRRPQHWCQYDNFQSDCPILCGYCPNPN</sequence>
<protein>
    <recommendedName>
        <fullName>Cysteine-rich venom protein</fullName>
        <shortName>CRVP</shortName>
        <ecNumber>3.4.-.-</ecNumber>
    </recommendedName>
    <alternativeName>
        <fullName>Substrate-specific endoprotease Tex31</fullName>
    </alternativeName>
</protein>
<name>TX31_CONTE</name>
<evidence type="ECO:0000269" key="1">
    <source>
    </source>
</evidence>
<evidence type="ECO:0000305" key="2"/>
<comment type="function">
    <text>Protease responsible for cleaving the conotoxins from their propeptide precursors. The target propeptide requires minimum four residues including a leucine N-terminal of the cleavage site for efficient substrate processing (example: Xaa-Xaa-Xaa-Leu-Asn-Lys-Arg-toxin).</text>
</comment>
<comment type="subcellular location">
    <subcellularLocation>
        <location>Secreted</location>
    </subcellularLocation>
</comment>
<comment type="tissue specificity">
    <text>Expressed by the venom duct.</text>
</comment>
<comment type="PTM">
    <text>Contains 11 disulfide bonds.</text>
</comment>
<comment type="mass spectrometry"/>
<comment type="similarity">
    <text evidence="2">Belongs to the CRISP family.</text>
</comment>